<sequence>MIVGLIGVVEKISALETHIEVQGVVYGVQVSMRTAALLQAGQKARLKILQVIKEDAHLLYGFLEEGEKILFERLLKINGVGGRIALAILSSFSPNEFENIIATKEVKRLQQVPGIGKKLADKIMVDLIGFFIQDETKPMHNEVFLALESLGFKSAEINKVLKTLKPSLSIEAAIKEALQQLRS</sequence>
<dbReference type="EMBL" id="CP001173">
    <property type="protein sequence ID" value="ACI27591.1"/>
    <property type="molecule type" value="Genomic_DNA"/>
</dbReference>
<dbReference type="RefSeq" id="WP_000635167.1">
    <property type="nucleotide sequence ID" value="NC_011333.1"/>
</dbReference>
<dbReference type="SMR" id="B5Z7P2"/>
<dbReference type="KEGG" id="hpg:HPG27_836"/>
<dbReference type="HOGENOM" id="CLU_087936_3_1_7"/>
<dbReference type="Proteomes" id="UP000001735">
    <property type="component" value="Chromosome"/>
</dbReference>
<dbReference type="GO" id="GO:0005737">
    <property type="term" value="C:cytoplasm"/>
    <property type="evidence" value="ECO:0007669"/>
    <property type="project" value="UniProtKB-SubCell"/>
</dbReference>
<dbReference type="GO" id="GO:0009379">
    <property type="term" value="C:Holliday junction helicase complex"/>
    <property type="evidence" value="ECO:0007669"/>
    <property type="project" value="InterPro"/>
</dbReference>
<dbReference type="GO" id="GO:0048476">
    <property type="term" value="C:Holliday junction resolvase complex"/>
    <property type="evidence" value="ECO:0007669"/>
    <property type="project" value="UniProtKB-UniRule"/>
</dbReference>
<dbReference type="GO" id="GO:0005524">
    <property type="term" value="F:ATP binding"/>
    <property type="evidence" value="ECO:0007669"/>
    <property type="project" value="InterPro"/>
</dbReference>
<dbReference type="GO" id="GO:0000400">
    <property type="term" value="F:four-way junction DNA binding"/>
    <property type="evidence" value="ECO:0007669"/>
    <property type="project" value="UniProtKB-UniRule"/>
</dbReference>
<dbReference type="GO" id="GO:0009378">
    <property type="term" value="F:four-way junction helicase activity"/>
    <property type="evidence" value="ECO:0007669"/>
    <property type="project" value="InterPro"/>
</dbReference>
<dbReference type="GO" id="GO:0006310">
    <property type="term" value="P:DNA recombination"/>
    <property type="evidence" value="ECO:0007669"/>
    <property type="project" value="UniProtKB-UniRule"/>
</dbReference>
<dbReference type="GO" id="GO:0006281">
    <property type="term" value="P:DNA repair"/>
    <property type="evidence" value="ECO:0007669"/>
    <property type="project" value="UniProtKB-UniRule"/>
</dbReference>
<dbReference type="CDD" id="cd14332">
    <property type="entry name" value="UBA_RuvA_C"/>
    <property type="match status" value="1"/>
</dbReference>
<dbReference type="Gene3D" id="1.10.150.20">
    <property type="entry name" value="5' to 3' exonuclease, C-terminal subdomain"/>
    <property type="match status" value="1"/>
</dbReference>
<dbReference type="Gene3D" id="1.10.8.10">
    <property type="entry name" value="DNA helicase RuvA subunit, C-terminal domain"/>
    <property type="match status" value="1"/>
</dbReference>
<dbReference type="Gene3D" id="2.40.50.140">
    <property type="entry name" value="Nucleic acid-binding proteins"/>
    <property type="match status" value="1"/>
</dbReference>
<dbReference type="HAMAP" id="MF_00031">
    <property type="entry name" value="DNA_HJ_migration_RuvA"/>
    <property type="match status" value="1"/>
</dbReference>
<dbReference type="InterPro" id="IPR013849">
    <property type="entry name" value="DNA_helicase_Holl-junc_RuvA_I"/>
</dbReference>
<dbReference type="InterPro" id="IPR003583">
    <property type="entry name" value="Hlx-hairpin-Hlx_DNA-bd_motif"/>
</dbReference>
<dbReference type="InterPro" id="IPR012340">
    <property type="entry name" value="NA-bd_OB-fold"/>
</dbReference>
<dbReference type="InterPro" id="IPR000085">
    <property type="entry name" value="RuvA"/>
</dbReference>
<dbReference type="InterPro" id="IPR010994">
    <property type="entry name" value="RuvA_2-like"/>
</dbReference>
<dbReference type="InterPro" id="IPR011114">
    <property type="entry name" value="RuvA_C"/>
</dbReference>
<dbReference type="InterPro" id="IPR036267">
    <property type="entry name" value="RuvA_C_sf"/>
</dbReference>
<dbReference type="NCBIfam" id="TIGR00084">
    <property type="entry name" value="ruvA"/>
    <property type="match status" value="1"/>
</dbReference>
<dbReference type="Pfam" id="PF14520">
    <property type="entry name" value="HHH_5"/>
    <property type="match status" value="1"/>
</dbReference>
<dbReference type="Pfam" id="PF07499">
    <property type="entry name" value="RuvA_C"/>
    <property type="match status" value="1"/>
</dbReference>
<dbReference type="Pfam" id="PF01330">
    <property type="entry name" value="RuvA_N"/>
    <property type="match status" value="1"/>
</dbReference>
<dbReference type="SMART" id="SM00278">
    <property type="entry name" value="HhH1"/>
    <property type="match status" value="2"/>
</dbReference>
<dbReference type="SUPFAM" id="SSF46929">
    <property type="entry name" value="DNA helicase RuvA subunit, C-terminal domain"/>
    <property type="match status" value="1"/>
</dbReference>
<dbReference type="SUPFAM" id="SSF50249">
    <property type="entry name" value="Nucleic acid-binding proteins"/>
    <property type="match status" value="1"/>
</dbReference>
<dbReference type="SUPFAM" id="SSF47781">
    <property type="entry name" value="RuvA domain 2-like"/>
    <property type="match status" value="1"/>
</dbReference>
<feature type="chain" id="PRO_1000090322" description="Holliday junction branch migration complex subunit RuvA">
    <location>
        <begin position="1"/>
        <end position="183"/>
    </location>
</feature>
<feature type="region of interest" description="Domain I" evidence="1">
    <location>
        <begin position="1"/>
        <end position="63"/>
    </location>
</feature>
<feature type="region of interest" description="Domain II" evidence="1">
    <location>
        <begin position="64"/>
        <end position="141"/>
    </location>
</feature>
<feature type="region of interest" description="Domain III" evidence="1">
    <location>
        <begin position="141"/>
        <end position="183"/>
    </location>
</feature>
<feature type="region of interest" description="Flexible linker" evidence="1">
    <location>
        <position position="141"/>
    </location>
</feature>
<organism>
    <name type="scientific">Helicobacter pylori (strain G27)</name>
    <dbReference type="NCBI Taxonomy" id="563041"/>
    <lineage>
        <taxon>Bacteria</taxon>
        <taxon>Pseudomonadati</taxon>
        <taxon>Campylobacterota</taxon>
        <taxon>Epsilonproteobacteria</taxon>
        <taxon>Campylobacterales</taxon>
        <taxon>Helicobacteraceae</taxon>
        <taxon>Helicobacter</taxon>
    </lineage>
</organism>
<protein>
    <recommendedName>
        <fullName evidence="1">Holliday junction branch migration complex subunit RuvA</fullName>
    </recommendedName>
</protein>
<proteinExistence type="inferred from homology"/>
<name>RUVA_HELPG</name>
<reference key="1">
    <citation type="journal article" date="2009" name="J. Bacteriol.">
        <title>The complete genome sequence of Helicobacter pylori strain G27.</title>
        <authorList>
            <person name="Baltrus D.A."/>
            <person name="Amieva M.R."/>
            <person name="Covacci A."/>
            <person name="Lowe T.M."/>
            <person name="Merrell D.S."/>
            <person name="Ottemann K.M."/>
            <person name="Stein M."/>
            <person name="Salama N.R."/>
            <person name="Guillemin K."/>
        </authorList>
    </citation>
    <scope>NUCLEOTIDE SEQUENCE [LARGE SCALE GENOMIC DNA]</scope>
    <source>
        <strain>G27</strain>
    </source>
</reference>
<keyword id="KW-0963">Cytoplasm</keyword>
<keyword id="KW-0227">DNA damage</keyword>
<keyword id="KW-0233">DNA recombination</keyword>
<keyword id="KW-0234">DNA repair</keyword>
<keyword id="KW-0238">DNA-binding</keyword>
<keyword id="KW-1185">Reference proteome</keyword>
<gene>
    <name evidence="1" type="primary">ruvA</name>
    <name type="ordered locus">HPG27_836</name>
</gene>
<comment type="function">
    <text evidence="1">The RuvA-RuvB-RuvC complex processes Holliday junction (HJ) DNA during genetic recombination and DNA repair, while the RuvA-RuvB complex plays an important role in the rescue of blocked DNA replication forks via replication fork reversal (RFR). RuvA specifically binds to HJ cruciform DNA, conferring on it an open structure. The RuvB hexamer acts as an ATP-dependent pump, pulling dsDNA into and through the RuvAB complex. HJ branch migration allows RuvC to scan DNA until it finds its consensus sequence, where it cleaves and resolves the cruciform DNA.</text>
</comment>
<comment type="subunit">
    <text evidence="1">Homotetramer. Forms an RuvA(8)-RuvB(12)-Holliday junction (HJ) complex. HJ DNA is sandwiched between 2 RuvA tetramers; dsDNA enters through RuvA and exits via RuvB. An RuvB hexamer assembles on each DNA strand where it exits the tetramer. Each RuvB hexamer is contacted by two RuvA subunits (via domain III) on 2 adjacent RuvB subunits; this complex drives branch migration. In the full resolvosome a probable DNA-RuvA(4)-RuvB(12)-RuvC(2) complex forms which resolves the HJ.</text>
</comment>
<comment type="subcellular location">
    <subcellularLocation>
        <location evidence="1">Cytoplasm</location>
    </subcellularLocation>
</comment>
<comment type="domain">
    <text evidence="1">Has three domains with a flexible linker between the domains II and III and assumes an 'L' shape. Domain III is highly mobile and contacts RuvB.</text>
</comment>
<comment type="similarity">
    <text evidence="1">Belongs to the RuvA family.</text>
</comment>
<accession>B5Z7P2</accession>
<evidence type="ECO:0000255" key="1">
    <source>
        <dbReference type="HAMAP-Rule" id="MF_00031"/>
    </source>
</evidence>